<name>COX2_KLULA</name>
<organism>
    <name type="scientific">Kluyveromyces lactis (strain ATCC 8585 / CBS 2359 / DSM 70799 / NBRC 1267 / NRRL Y-1140 / WM37)</name>
    <name type="common">Yeast</name>
    <name type="synonym">Candida sphaerica</name>
    <dbReference type="NCBI Taxonomy" id="284590"/>
    <lineage>
        <taxon>Eukaryota</taxon>
        <taxon>Fungi</taxon>
        <taxon>Dikarya</taxon>
        <taxon>Ascomycota</taxon>
        <taxon>Saccharomycotina</taxon>
        <taxon>Saccharomycetes</taxon>
        <taxon>Saccharomycetales</taxon>
        <taxon>Saccharomycetaceae</taxon>
        <taxon>Kluyveromyces</taxon>
    </lineage>
</organism>
<reference key="1">
    <citation type="journal article" date="1990" name="Yeast">
        <title>Nucleotide sequence of the cytochrome oxidase subunit 2 and val-tRNA genes and surrounding sequences from Kluyveromyces lactis K8 mitochondrial DNA.</title>
        <authorList>
            <person name="Hardy C.M."/>
            <person name="Clark-Walker G.D."/>
        </authorList>
    </citation>
    <scope>NUCLEOTIDE SEQUENCE [GENOMIC DNA]</scope>
    <source>
        <strain>ATCC 90735 / K8</strain>
    </source>
</reference>
<reference key="2">
    <citation type="submission" date="2000-07" db="EMBL/GenBank/DDBJ databases">
        <authorList>
            <person name="Hardy C.M."/>
        </authorList>
    </citation>
    <scope>SEQUENCE REVISION TO 81-82</scope>
</reference>
<reference key="3">
    <citation type="journal article" date="2005" name="FEMS Yeast Res.">
        <title>Complete nucleotide sequence of the mitochondrial DNA from Kluyveromyces lactis.</title>
        <authorList>
            <person name="Zivanovic Y."/>
            <person name="Wincker P."/>
            <person name="Vacherie B."/>
            <person name="Bolotin-Fukuhara M."/>
            <person name="Fukuhara H."/>
        </authorList>
    </citation>
    <scope>NUCLEOTIDE SEQUENCE [LARGE SCALE GENOMIC DNA]</scope>
    <source>
        <strain>ATCC 76492 / CBS 2359/152 / CLIB 210</strain>
    </source>
</reference>
<geneLocation type="mitochondrion"/>
<evidence type="ECO:0000250" key="1"/>
<evidence type="ECO:0000250" key="2">
    <source>
        <dbReference type="UniProtKB" id="P00410"/>
    </source>
</evidence>
<evidence type="ECO:0000255" key="3"/>
<evidence type="ECO:0000305" key="4"/>
<dbReference type="EC" id="7.1.1.9"/>
<dbReference type="EMBL" id="X15999">
    <property type="protein sequence ID" value="CAA34129.2"/>
    <property type="molecule type" value="Genomic_DNA"/>
</dbReference>
<dbReference type="EMBL" id="AY654900">
    <property type="protein sequence ID" value="AAT64953.1"/>
    <property type="status" value="ALT_INIT"/>
    <property type="molecule type" value="Genomic_DNA"/>
</dbReference>
<dbReference type="PIR" id="S11171">
    <property type="entry name" value="OBVK2M"/>
</dbReference>
<dbReference type="RefSeq" id="YP_054502.1">
    <property type="nucleotide sequence ID" value="NC_006077.1"/>
</dbReference>
<dbReference type="SMR" id="P20387"/>
<dbReference type="FunCoup" id="P20387">
    <property type="interactions" value="235"/>
</dbReference>
<dbReference type="STRING" id="284590.P20387"/>
<dbReference type="PaxDb" id="284590-P20387"/>
<dbReference type="GeneID" id="2914081"/>
<dbReference type="KEGG" id="kla:KllafMp06"/>
<dbReference type="InParanoid" id="P20387"/>
<dbReference type="GO" id="GO:0005743">
    <property type="term" value="C:mitochondrial inner membrane"/>
    <property type="evidence" value="ECO:0007669"/>
    <property type="project" value="UniProtKB-SubCell"/>
</dbReference>
<dbReference type="GO" id="GO:0005507">
    <property type="term" value="F:copper ion binding"/>
    <property type="evidence" value="ECO:0007669"/>
    <property type="project" value="InterPro"/>
</dbReference>
<dbReference type="GO" id="GO:0004129">
    <property type="term" value="F:cytochrome-c oxidase activity"/>
    <property type="evidence" value="ECO:0007669"/>
    <property type="project" value="UniProtKB-EC"/>
</dbReference>
<dbReference type="GO" id="GO:0042773">
    <property type="term" value="P:ATP synthesis coupled electron transport"/>
    <property type="evidence" value="ECO:0007669"/>
    <property type="project" value="TreeGrafter"/>
</dbReference>
<dbReference type="CDD" id="cd13912">
    <property type="entry name" value="CcO_II_C"/>
    <property type="match status" value="1"/>
</dbReference>
<dbReference type="FunFam" id="1.10.287.90:FF:000004">
    <property type="entry name" value="Cytochrome c oxidase subunit 2"/>
    <property type="match status" value="1"/>
</dbReference>
<dbReference type="FunFam" id="2.60.40.420:FF:000001">
    <property type="entry name" value="Cytochrome c oxidase subunit 2"/>
    <property type="match status" value="1"/>
</dbReference>
<dbReference type="Gene3D" id="1.10.287.90">
    <property type="match status" value="1"/>
</dbReference>
<dbReference type="Gene3D" id="2.60.40.420">
    <property type="entry name" value="Cupredoxins - blue copper proteins"/>
    <property type="match status" value="1"/>
</dbReference>
<dbReference type="InterPro" id="IPR045187">
    <property type="entry name" value="CcO_II"/>
</dbReference>
<dbReference type="InterPro" id="IPR002429">
    <property type="entry name" value="CcO_II-like_C"/>
</dbReference>
<dbReference type="InterPro" id="IPR034210">
    <property type="entry name" value="CcO_II_C"/>
</dbReference>
<dbReference type="InterPro" id="IPR001505">
    <property type="entry name" value="Copper_CuA"/>
</dbReference>
<dbReference type="InterPro" id="IPR008972">
    <property type="entry name" value="Cupredoxin"/>
</dbReference>
<dbReference type="InterPro" id="IPR014222">
    <property type="entry name" value="Cyt_c_oxidase_su2"/>
</dbReference>
<dbReference type="InterPro" id="IPR011759">
    <property type="entry name" value="Cyt_c_oxidase_su2_TM_dom"/>
</dbReference>
<dbReference type="InterPro" id="IPR036257">
    <property type="entry name" value="Cyt_c_oxidase_su2_TM_sf"/>
</dbReference>
<dbReference type="NCBIfam" id="TIGR02866">
    <property type="entry name" value="CoxB"/>
    <property type="match status" value="1"/>
</dbReference>
<dbReference type="PANTHER" id="PTHR22888:SF9">
    <property type="entry name" value="CYTOCHROME C OXIDASE SUBUNIT 2"/>
    <property type="match status" value="1"/>
</dbReference>
<dbReference type="PANTHER" id="PTHR22888">
    <property type="entry name" value="CYTOCHROME C OXIDASE, SUBUNIT II"/>
    <property type="match status" value="1"/>
</dbReference>
<dbReference type="Pfam" id="PF00116">
    <property type="entry name" value="COX2"/>
    <property type="match status" value="1"/>
</dbReference>
<dbReference type="Pfam" id="PF02790">
    <property type="entry name" value="COX2_TM"/>
    <property type="match status" value="1"/>
</dbReference>
<dbReference type="PRINTS" id="PR01166">
    <property type="entry name" value="CYCOXIDASEII"/>
</dbReference>
<dbReference type="SUPFAM" id="SSF49503">
    <property type="entry name" value="Cupredoxins"/>
    <property type="match status" value="1"/>
</dbReference>
<dbReference type="SUPFAM" id="SSF81464">
    <property type="entry name" value="Cytochrome c oxidase subunit II-like, transmembrane region"/>
    <property type="match status" value="1"/>
</dbReference>
<dbReference type="PROSITE" id="PS00078">
    <property type="entry name" value="COX2"/>
    <property type="match status" value="1"/>
</dbReference>
<dbReference type="PROSITE" id="PS50857">
    <property type="entry name" value="COX2_CUA"/>
    <property type="match status" value="1"/>
</dbReference>
<dbReference type="PROSITE" id="PS50999">
    <property type="entry name" value="COX2_TM"/>
    <property type="match status" value="1"/>
</dbReference>
<keyword id="KW-0186">Copper</keyword>
<keyword id="KW-0249">Electron transport</keyword>
<keyword id="KW-0460">Magnesium</keyword>
<keyword id="KW-0472">Membrane</keyword>
<keyword id="KW-0479">Metal-binding</keyword>
<keyword id="KW-0496">Mitochondrion</keyword>
<keyword id="KW-0999">Mitochondrion inner membrane</keyword>
<keyword id="KW-0679">Respiratory chain</keyword>
<keyword id="KW-0732">Signal</keyword>
<keyword id="KW-1278">Translocase</keyword>
<keyword id="KW-0812">Transmembrane</keyword>
<keyword id="KW-1133">Transmembrane helix</keyword>
<keyword id="KW-0813">Transport</keyword>
<feature type="signal peptide" evidence="1">
    <location>
        <begin position="1"/>
        <end position="11"/>
    </location>
</feature>
<feature type="chain" id="PRO_0000006039" description="Cytochrome c oxidase subunit 2">
    <location>
        <begin position="12"/>
        <end position="247"/>
    </location>
</feature>
<feature type="topological domain" description="Mitochondrial intermembrane" evidence="3">
    <location>
        <begin position="12"/>
        <end position="38"/>
    </location>
</feature>
<feature type="transmembrane region" description="Helical" evidence="3">
    <location>
        <begin position="39"/>
        <end position="59"/>
    </location>
</feature>
<feature type="topological domain" description="Mitochondrial matrix" evidence="3">
    <location>
        <begin position="60"/>
        <end position="78"/>
    </location>
</feature>
<feature type="transmembrane region" description="Helical" evidence="3">
    <location>
        <begin position="79"/>
        <end position="101"/>
    </location>
</feature>
<feature type="topological domain" description="Mitochondrial intermembrane" evidence="3">
    <location>
        <begin position="102"/>
        <end position="247"/>
    </location>
</feature>
<feature type="binding site" evidence="2">
    <location>
        <position position="182"/>
    </location>
    <ligand>
        <name>Cu cation</name>
        <dbReference type="ChEBI" id="CHEBI:23378"/>
        <label>A1</label>
    </ligand>
</feature>
<feature type="binding site" evidence="2">
    <location>
        <position position="217"/>
    </location>
    <ligand>
        <name>Cu cation</name>
        <dbReference type="ChEBI" id="CHEBI:23378"/>
        <label>A1</label>
    </ligand>
</feature>
<feature type="binding site" evidence="2">
    <location>
        <position position="217"/>
    </location>
    <ligand>
        <name>Cu cation</name>
        <dbReference type="ChEBI" id="CHEBI:23378"/>
        <label>A2</label>
    </ligand>
</feature>
<feature type="binding site" evidence="2">
    <location>
        <position position="219"/>
    </location>
    <ligand>
        <name>Cu cation</name>
        <dbReference type="ChEBI" id="CHEBI:23378"/>
        <label>A2</label>
    </ligand>
</feature>
<feature type="binding site" evidence="2">
    <location>
        <position position="219"/>
    </location>
    <ligand>
        <name>Mg(2+)</name>
        <dbReference type="ChEBI" id="CHEBI:18420"/>
        <note>ligand shared with subunit 1</note>
    </ligand>
</feature>
<feature type="binding site" evidence="2">
    <location>
        <position position="221"/>
    </location>
    <ligand>
        <name>Cu cation</name>
        <dbReference type="ChEBI" id="CHEBI:23378"/>
        <label>A1</label>
    </ligand>
</feature>
<feature type="binding site" evidence="2">
    <location>
        <position position="221"/>
    </location>
    <ligand>
        <name>Cu cation</name>
        <dbReference type="ChEBI" id="CHEBI:23378"/>
        <label>A2</label>
    </ligand>
</feature>
<feature type="binding site" evidence="2">
    <location>
        <position position="225"/>
    </location>
    <ligand>
        <name>Cu cation</name>
        <dbReference type="ChEBI" id="CHEBI:23378"/>
        <label>A2</label>
    </ligand>
</feature>
<feature type="binding site" evidence="2">
    <location>
        <position position="228"/>
    </location>
    <ligand>
        <name>Cu cation</name>
        <dbReference type="ChEBI" id="CHEBI:23378"/>
        <label>A1</label>
    </ligand>
</feature>
<feature type="sequence conflict" description="In Ref. 1 and 3." evidence="4" ref="1 3">
    <original>A</original>
    <variation>D</variation>
    <location>
        <position position="86"/>
    </location>
</feature>
<sequence>MFYLLNSIIMNDVPTPYGMYFQDSATPNQEGILELHDNIMFYLFIILGLVSWLLFTIVRTYSKNPIAYKYIKHGQTIEIIWTIFPAVILLIIAFPSFILLYLCDEVISPAMTIKAIGLQWYWKYEYSDFINDNGETVEFESYVIPEDLLEDGQLRLLDTDTSVVVPVDTHIRFVVTAADVIHDFAVPSLGIKIDAAPGRLNQVSALIQREGVFYGQCSEICGQSHSAMPIKIEAVSLPAFLEWLNEQ</sequence>
<comment type="function">
    <text evidence="2">Component of the cytochrome c oxidase, the last enzyme in the mitochondrial electron transport chain which drives oxidative phosphorylation. The respiratory chain contains 3 multisubunit complexes succinate dehydrogenase (complex II, CII), ubiquinol-cytochrome c oxidoreductase (cytochrome b-c1 complex, complex III, CIII) and cytochrome c oxidase (complex IV, CIV), that cooperate to transfer electrons derived from NADH and succinate to molecular oxygen, creating an electrochemical gradient over the inner membrane that drives transmembrane transport and the ATP synthase. Cytochrome c oxidase is the component of the respiratory chain that catalyzes the reduction of oxygen to water. Electrons originating from reduced cytochrome c in the intermembrane space (IMS) are transferred via the dinuclear copper A center (CU(A)) of subunit 2 and heme A of subunit 1 to the active site in subunit 1, a binuclear center (BNC) formed by heme A3 and copper B (CU(B)). The BNC reduces molecular oxygen to 2 water molecules using 4 electrons from cytochrome c in the IMS and 4 protons from the mitochondrial matrix.</text>
</comment>
<comment type="catalytic activity">
    <reaction evidence="2">
        <text>4 Fe(II)-[cytochrome c] + O2 + 8 H(+)(in) = 4 Fe(III)-[cytochrome c] + 2 H2O + 4 H(+)(out)</text>
        <dbReference type="Rhea" id="RHEA:11436"/>
        <dbReference type="Rhea" id="RHEA-COMP:10350"/>
        <dbReference type="Rhea" id="RHEA-COMP:14399"/>
        <dbReference type="ChEBI" id="CHEBI:15377"/>
        <dbReference type="ChEBI" id="CHEBI:15378"/>
        <dbReference type="ChEBI" id="CHEBI:15379"/>
        <dbReference type="ChEBI" id="CHEBI:29033"/>
        <dbReference type="ChEBI" id="CHEBI:29034"/>
        <dbReference type="EC" id="7.1.1.9"/>
    </reaction>
    <physiologicalReaction direction="left-to-right" evidence="2">
        <dbReference type="Rhea" id="RHEA:11437"/>
    </physiologicalReaction>
</comment>
<comment type="cofactor">
    <cofactor evidence="2">
        <name>Cu cation</name>
        <dbReference type="ChEBI" id="CHEBI:23378"/>
    </cofactor>
    <text evidence="2">Binds a dinuclear copper A center per subunit.</text>
</comment>
<comment type="subunit">
    <text evidence="2">Component of the cytochrome c oxidase (complex IV, CIV), a multisubunit enzyme composed of a catalytic core of 3 subunits and several supernumerary subunits. The complex exists as a monomer or a dimer and forms supercomplexes (SCs) in the inner mitochondrial membrane with ubiquinol-cytochrome c oxidoreductase (cytochrome b-c1 complex, complex III, CIII).</text>
</comment>
<comment type="subcellular location">
    <subcellularLocation>
        <location evidence="2">Mitochondrion inner membrane</location>
        <topology evidence="2">Multi-pass membrane protein</topology>
    </subcellularLocation>
</comment>
<comment type="PTM">
    <text>The signal sequence of COX2 is processed by IMP1.</text>
</comment>
<comment type="similarity">
    <text evidence="4">Belongs to the cytochrome c oxidase subunit 2 family.</text>
</comment>
<comment type="sequence caution" evidence="4">
    <conflict type="erroneous initiation">
        <sequence resource="EMBL-CDS" id="AAT64953"/>
    </conflict>
</comment>
<proteinExistence type="inferred from homology"/>
<gene>
    <name type="primary">COX2</name>
</gene>
<accession>P20387</accession>
<accession>Q6DN57</accession>
<protein>
    <recommendedName>
        <fullName>Cytochrome c oxidase subunit 2</fullName>
        <ecNumber>7.1.1.9</ecNumber>
    </recommendedName>
    <alternativeName>
        <fullName>Cytochrome c oxidase polypeptide II</fullName>
    </alternativeName>
</protein>